<reference key="1">
    <citation type="submission" date="2004-06" db="EMBL/GenBank/DDBJ databases">
        <authorList>
            <person name="Birren B.W."/>
            <person name="Stange-Thomann N."/>
            <person name="Hafez N."/>
            <person name="DeCaprio D."/>
            <person name="Fisher S."/>
            <person name="Butler J."/>
            <person name="Elkins T."/>
            <person name="Kodira C.D."/>
            <person name="Major J."/>
            <person name="Wang S."/>
            <person name="Nicol R."/>
            <person name="Nusbaum C."/>
        </authorList>
    </citation>
    <scope>NUCLEOTIDE SEQUENCE [LARGE SCALE GENOMIC DNA]</scope>
    <source>
        <strain>ATCC 33453 / NBRC 100688 / NCTC 11704 / L1</strain>
    </source>
</reference>
<evidence type="ECO:0000255" key="1">
    <source>
        <dbReference type="HAMAP-Rule" id="MF_00270"/>
    </source>
</evidence>
<evidence type="ECO:0000305" key="2"/>
<sequence length="76" mass="8906">MAMKKFVKKRKKVNFFAKNKINYIDYKDVELLKKFISGNGQILPRRITGTSPKHQRQLAVAIKRARQMALLPYVID</sequence>
<feature type="chain" id="PRO_0000111175" description="Small ribosomal subunit protein bS18">
    <location>
        <begin position="1"/>
        <end position="76"/>
    </location>
</feature>
<organism>
    <name type="scientific">Mesoplasma florum (strain ATCC 33453 / NBRC 100688 / NCTC 11704 / L1)</name>
    <name type="common">Acholeplasma florum</name>
    <dbReference type="NCBI Taxonomy" id="265311"/>
    <lineage>
        <taxon>Bacteria</taxon>
        <taxon>Bacillati</taxon>
        <taxon>Mycoplasmatota</taxon>
        <taxon>Mollicutes</taxon>
        <taxon>Entomoplasmatales</taxon>
        <taxon>Entomoplasmataceae</taxon>
        <taxon>Mesoplasma</taxon>
    </lineage>
</organism>
<protein>
    <recommendedName>
        <fullName evidence="1">Small ribosomal subunit protein bS18</fullName>
    </recommendedName>
    <alternativeName>
        <fullName evidence="2">30S ribosomal protein S18</fullName>
    </alternativeName>
</protein>
<comment type="function">
    <text evidence="1">Binds as a heterodimer with protein bS6 to the central domain of the 16S rRNA, where it helps stabilize the platform of the 30S subunit.</text>
</comment>
<comment type="subunit">
    <text evidence="1">Part of the 30S ribosomal subunit. Forms a tight heterodimer with protein bS6.</text>
</comment>
<comment type="similarity">
    <text evidence="1">Belongs to the bacterial ribosomal protein bS18 family.</text>
</comment>
<keyword id="KW-1185">Reference proteome</keyword>
<keyword id="KW-0687">Ribonucleoprotein</keyword>
<keyword id="KW-0689">Ribosomal protein</keyword>
<keyword id="KW-0694">RNA-binding</keyword>
<keyword id="KW-0699">rRNA-binding</keyword>
<proteinExistence type="inferred from homology"/>
<name>RS18_MESFL</name>
<accession>Q6F235</accession>
<dbReference type="EMBL" id="AE017263">
    <property type="protein sequence ID" value="AAT75438.1"/>
    <property type="molecule type" value="Genomic_DNA"/>
</dbReference>
<dbReference type="RefSeq" id="WP_011182979.1">
    <property type="nucleotide sequence ID" value="NC_006055.1"/>
</dbReference>
<dbReference type="RefSeq" id="YP_053322.1">
    <property type="nucleotide sequence ID" value="NC_006055.1"/>
</dbReference>
<dbReference type="SMR" id="Q6F235"/>
<dbReference type="STRING" id="265311.Mfl082"/>
<dbReference type="PaxDb" id="265311-Mfl082"/>
<dbReference type="EnsemblBacteria" id="AAT75438">
    <property type="protein sequence ID" value="AAT75438"/>
    <property type="gene ID" value="Mfl082"/>
</dbReference>
<dbReference type="GeneID" id="2898252"/>
<dbReference type="KEGG" id="mfl:Mfl082"/>
<dbReference type="PATRIC" id="fig|265311.5.peg.83"/>
<dbReference type="eggNOG" id="COG0238">
    <property type="taxonomic scope" value="Bacteria"/>
</dbReference>
<dbReference type="HOGENOM" id="CLU_148710_2_2_14"/>
<dbReference type="OrthoDB" id="9812008at2"/>
<dbReference type="Proteomes" id="UP000006647">
    <property type="component" value="Chromosome"/>
</dbReference>
<dbReference type="GO" id="GO:0022627">
    <property type="term" value="C:cytosolic small ribosomal subunit"/>
    <property type="evidence" value="ECO:0007669"/>
    <property type="project" value="TreeGrafter"/>
</dbReference>
<dbReference type="GO" id="GO:0070181">
    <property type="term" value="F:small ribosomal subunit rRNA binding"/>
    <property type="evidence" value="ECO:0007669"/>
    <property type="project" value="TreeGrafter"/>
</dbReference>
<dbReference type="GO" id="GO:0003735">
    <property type="term" value="F:structural constituent of ribosome"/>
    <property type="evidence" value="ECO:0007669"/>
    <property type="project" value="InterPro"/>
</dbReference>
<dbReference type="GO" id="GO:0006412">
    <property type="term" value="P:translation"/>
    <property type="evidence" value="ECO:0007669"/>
    <property type="project" value="UniProtKB-UniRule"/>
</dbReference>
<dbReference type="Gene3D" id="4.10.640.10">
    <property type="entry name" value="Ribosomal protein S18"/>
    <property type="match status" value="1"/>
</dbReference>
<dbReference type="HAMAP" id="MF_00270">
    <property type="entry name" value="Ribosomal_bS18"/>
    <property type="match status" value="1"/>
</dbReference>
<dbReference type="InterPro" id="IPR001648">
    <property type="entry name" value="Ribosomal_bS18"/>
</dbReference>
<dbReference type="InterPro" id="IPR036870">
    <property type="entry name" value="Ribosomal_bS18_sf"/>
</dbReference>
<dbReference type="NCBIfam" id="TIGR00165">
    <property type="entry name" value="S18"/>
    <property type="match status" value="1"/>
</dbReference>
<dbReference type="PANTHER" id="PTHR13479">
    <property type="entry name" value="30S RIBOSOMAL PROTEIN S18"/>
    <property type="match status" value="1"/>
</dbReference>
<dbReference type="PANTHER" id="PTHR13479:SF40">
    <property type="entry name" value="SMALL RIBOSOMAL SUBUNIT PROTEIN BS18M"/>
    <property type="match status" value="1"/>
</dbReference>
<dbReference type="Pfam" id="PF01084">
    <property type="entry name" value="Ribosomal_S18"/>
    <property type="match status" value="1"/>
</dbReference>
<dbReference type="PRINTS" id="PR00974">
    <property type="entry name" value="RIBOSOMALS18"/>
</dbReference>
<dbReference type="SUPFAM" id="SSF46911">
    <property type="entry name" value="Ribosomal protein S18"/>
    <property type="match status" value="1"/>
</dbReference>
<gene>
    <name evidence="1" type="primary">rpsR</name>
    <name type="ordered locus">Mfl082</name>
</gene>